<name>ACRB_ASPTN</name>
<keyword id="KW-0175">Coiled coil</keyword>
<keyword id="KW-0472">Membrane</keyword>
<keyword id="KW-1185">Reference proteome</keyword>
<keyword id="KW-0812">Transmembrane</keyword>
<keyword id="KW-1133">Transmembrane helix</keyword>
<keyword id="KW-0833">Ubl conjugation pathway</keyword>
<protein>
    <recommendedName>
        <fullName>Probable ubiquitination network signaling protein acrB</fullName>
    </recommendedName>
    <alternativeName>
        <fullName>Acriflavine resistance protein B</fullName>
    </alternativeName>
</protein>
<accession>Q0CT23</accession>
<evidence type="ECO:0000250" key="1"/>
<evidence type="ECO:0000255" key="2"/>
<evidence type="ECO:0000256" key="3">
    <source>
        <dbReference type="SAM" id="MobiDB-lite"/>
    </source>
</evidence>
<evidence type="ECO:0000305" key="4"/>
<gene>
    <name type="primary">acrB</name>
    <name type="synonym">acr2</name>
    <name type="ORF">ATEG_03161</name>
</gene>
<dbReference type="EMBL" id="CH476597">
    <property type="protein sequence ID" value="EAU36435.1"/>
    <property type="molecule type" value="Genomic_DNA"/>
</dbReference>
<dbReference type="RefSeq" id="XP_001212339.1">
    <property type="nucleotide sequence ID" value="XM_001212339.1"/>
</dbReference>
<dbReference type="SMR" id="Q0CT23"/>
<dbReference type="STRING" id="341663.Q0CT23"/>
<dbReference type="EnsemblFungi" id="EAU36435">
    <property type="protein sequence ID" value="EAU36435"/>
    <property type="gene ID" value="ATEG_03161"/>
</dbReference>
<dbReference type="GeneID" id="4317907"/>
<dbReference type="VEuPathDB" id="FungiDB:ATEG_03161"/>
<dbReference type="eggNOG" id="ENOG502QSPS">
    <property type="taxonomic scope" value="Eukaryota"/>
</dbReference>
<dbReference type="HOGENOM" id="CLU_005822_0_0_1"/>
<dbReference type="OMA" id="NNAFWQP"/>
<dbReference type="OrthoDB" id="4158994at2759"/>
<dbReference type="Proteomes" id="UP000007963">
    <property type="component" value="Unassembled WGS sequence"/>
</dbReference>
<dbReference type="GO" id="GO:0016020">
    <property type="term" value="C:membrane"/>
    <property type="evidence" value="ECO:0007669"/>
    <property type="project" value="UniProtKB-SubCell"/>
</dbReference>
<dbReference type="PROSITE" id="PS00589">
    <property type="entry name" value="PTS_HPR_SER"/>
    <property type="match status" value="1"/>
</dbReference>
<comment type="function">
    <text evidence="1">Component of the regulatory network controlling carbon source utilization through ubiquitination and deubiquitination involving creA, creB, creC, creD and acrB. Involved in resistance to acriflavine, and required for normal growth on a range of sole carbon sources, including fructose, cellobiose, raffinose, and starch, and reduced utilization of amino acids, including GABA and beta-alanine, as sole carbon and nitrogen sources (By similarity).</text>
</comment>
<comment type="subcellular location">
    <subcellularLocation>
        <location evidence="4">Membrane</location>
        <topology evidence="4">Multi-pass membrane protein</topology>
    </subcellularLocation>
</comment>
<comment type="similarity">
    <text evidence="4">Belongs to the acrB family.</text>
</comment>
<feature type="chain" id="PRO_0000395731" description="Probable ubiquitination network signaling protein acrB">
    <location>
        <begin position="1"/>
        <end position="1013"/>
    </location>
</feature>
<feature type="transmembrane region" description="Helical" evidence="2">
    <location>
        <begin position="159"/>
        <end position="179"/>
    </location>
</feature>
<feature type="transmembrane region" description="Helical" evidence="2">
    <location>
        <begin position="212"/>
        <end position="232"/>
    </location>
</feature>
<feature type="transmembrane region" description="Helical" evidence="2">
    <location>
        <begin position="255"/>
        <end position="275"/>
    </location>
</feature>
<feature type="region of interest" description="Disordered" evidence="3">
    <location>
        <begin position="1"/>
        <end position="65"/>
    </location>
</feature>
<feature type="region of interest" description="Disordered" evidence="3">
    <location>
        <begin position="104"/>
        <end position="139"/>
    </location>
</feature>
<feature type="region of interest" description="Disordered" evidence="3">
    <location>
        <begin position="342"/>
        <end position="367"/>
    </location>
</feature>
<feature type="region of interest" description="Disordered" evidence="3">
    <location>
        <begin position="574"/>
        <end position="599"/>
    </location>
</feature>
<feature type="region of interest" description="Disordered" evidence="3">
    <location>
        <begin position="878"/>
        <end position="906"/>
    </location>
</feature>
<feature type="region of interest" description="Disordered" evidence="3">
    <location>
        <begin position="954"/>
        <end position="1013"/>
    </location>
</feature>
<feature type="coiled-coil region" evidence="2">
    <location>
        <begin position="597"/>
        <end position="806"/>
    </location>
</feature>
<feature type="compositionally biased region" description="Polar residues" evidence="3">
    <location>
        <begin position="33"/>
        <end position="64"/>
    </location>
</feature>
<feature type="compositionally biased region" description="Gly residues" evidence="3">
    <location>
        <begin position="993"/>
        <end position="1002"/>
    </location>
</feature>
<feature type="compositionally biased region" description="Low complexity" evidence="3">
    <location>
        <begin position="1003"/>
        <end position="1013"/>
    </location>
</feature>
<organism>
    <name type="scientific">Aspergillus terreus (strain NIH 2624 / FGSC A1156)</name>
    <dbReference type="NCBI Taxonomy" id="341663"/>
    <lineage>
        <taxon>Eukaryota</taxon>
        <taxon>Fungi</taxon>
        <taxon>Dikarya</taxon>
        <taxon>Ascomycota</taxon>
        <taxon>Pezizomycotina</taxon>
        <taxon>Eurotiomycetes</taxon>
        <taxon>Eurotiomycetidae</taxon>
        <taxon>Eurotiales</taxon>
        <taxon>Aspergillaceae</taxon>
        <taxon>Aspergillus</taxon>
        <taxon>Aspergillus subgen. Circumdati</taxon>
    </lineage>
</organism>
<reference key="1">
    <citation type="submission" date="2005-09" db="EMBL/GenBank/DDBJ databases">
        <title>Annotation of the Aspergillus terreus NIH2624 genome.</title>
        <authorList>
            <person name="Birren B.W."/>
            <person name="Lander E.S."/>
            <person name="Galagan J.E."/>
            <person name="Nusbaum C."/>
            <person name="Devon K."/>
            <person name="Henn M."/>
            <person name="Ma L.-J."/>
            <person name="Jaffe D.B."/>
            <person name="Butler J."/>
            <person name="Alvarez P."/>
            <person name="Gnerre S."/>
            <person name="Grabherr M."/>
            <person name="Kleber M."/>
            <person name="Mauceli E.W."/>
            <person name="Brockman W."/>
            <person name="Rounsley S."/>
            <person name="Young S.K."/>
            <person name="LaButti K."/>
            <person name="Pushparaj V."/>
            <person name="DeCaprio D."/>
            <person name="Crawford M."/>
            <person name="Koehrsen M."/>
            <person name="Engels R."/>
            <person name="Montgomery P."/>
            <person name="Pearson M."/>
            <person name="Howarth C."/>
            <person name="Larson L."/>
            <person name="Luoma S."/>
            <person name="White J."/>
            <person name="Alvarado L."/>
            <person name="Kodira C.D."/>
            <person name="Zeng Q."/>
            <person name="Oleary S."/>
            <person name="Yandava C."/>
            <person name="Denning D.W."/>
            <person name="Nierman W.C."/>
            <person name="Milne T."/>
            <person name="Madden K."/>
        </authorList>
    </citation>
    <scope>NUCLEOTIDE SEQUENCE [LARGE SCALE GENOMIC DNA]</scope>
    <source>
        <strain>NIH 2624 / FGSC A1156</strain>
    </source>
</reference>
<sequence>MPRSSATARKSHSNRHDNGVVGSGKKVSKQKSNGHLNGNHANSSTPTSGPSSQVDWPSSRSNSDTAIPTTAAAAARLNGATENSKDIRGHLNGYAKGTSDMSYGQANGAVPQNGCLPGDAARRTEKPATASKRSGSSASVNPLHLASTILKSCPMYDTIAILIFLLQLPPMVLTLVQFLFASLTFMPPSGASAGSLTSNFDIFQGPAGTPSLGTMIAMDGFCLLFWGLFMWTWAQNFALDLAHVQVAITLGGGGSGKNGGVNALCVGIVLVLHLIRSKGIQDFVMGHLLSAKIISPDLLSQYSHLIPAEFRRTEPQSSPSWIRSLLAVHILAQAGTAMARRSMAKNRAPAPPRTGKRIDTEASAGSQTQFDSAFESGASMSSYIGPDGQFITPATHKDGRDRLISAKKRRRQANQVRSRQPFWAALASTKVTVMREYEHSRALSKTARGLTMTEDDLQGVSLDDGLVWITDVDSSTIRFAAGDFSSPDDASGSGVCETGRLSDDMEPFYVCVNGAQWATATISKVPDARKGTSAVHWRGEISGLAPNCAYTCSFMRSDTDEEICAMSVKTPATSDAEQVSSISAPPQPTYRPSSPTTTLKNSIINAEAKLNEKRSRMKKAKNDHKLVVSKIRKELENYNHRLHSGTDENRQKQRSLQLERNIKQTEEATAALGEQLDNLENIPEEELEEWTMQKAKYERELELLNSVKEELIAARSAVAREVSSLESELNSTVQRRERLQGRRTRVNEQYERIISANAQGLNERERRAAEQFAREQDQAKLEANFNEQLASITQSIQEYQLRTNQLWQQSAAIEQAIQQQQQQMLMDSAPLTPEGNLPGTNPLGDTPSLALAGLTTSAPSSRSLLGLNFPPLKSSPLQHASSLVGATSSHPASPTQTPSYLQHFPTSPLANASSPFDPDFVYRDRSFSNRSGRSSLYGFDLIDSSRRAPFQFDLSEAASEKRRSSGSESNGPNLGLRPISSPFPRAGSRASGSGSGGSGSGSGSPSSAAGKGI</sequence>
<proteinExistence type="inferred from homology"/>